<name>GLYA_RICRO</name>
<sequence>MNIFNNNLHETDKEINEIIKHEKLRQSSVIELIASENFVSPAVLEAQGALLTNKYAEGYPSKRFYNGCEEVDKAENLAIERVKKLFNCKYANVQPHSGSQANQAVYLALLQPGDTVLGMSLDSGGHLTHGAAPNMSGKWFNAVSYSVNKETYLIDYDEIERLADLHKPKLLIAGFSAYPRNIDFAKFREIVDKVGAYFMADIAHIAGLVATGEHQSPIPYAHAVTSTTHKTLRGPRGGLILSNDEEIGHKINSALFPGLQGGPLMHIIAAKAVAFLENLQPEYKSYIQQVISNAKALASSLQERGYDILTGGTDNHIVLVDLRKDGITGKLAANSLDRAGITCNKNAIPFDETSPFITSGIRLGTPACTTRGFKEKDFVLVGHMVADILDGLKNNEDNSALEQQVLNEVTKLIELFPFYG</sequence>
<accession>B0BV27</accession>
<reference key="1">
    <citation type="journal article" date="2008" name="Infect. Immun.">
        <title>Genomic comparison of virulent Rickettsia rickettsii Sheila Smith and avirulent Rickettsia rickettsii Iowa.</title>
        <authorList>
            <person name="Ellison D.W."/>
            <person name="Clark T.R."/>
            <person name="Sturdevant D.E."/>
            <person name="Virtaneva K."/>
            <person name="Porcella S.F."/>
            <person name="Hackstadt T."/>
        </authorList>
    </citation>
    <scope>NUCLEOTIDE SEQUENCE [LARGE SCALE GENOMIC DNA]</scope>
    <source>
        <strain>Iowa</strain>
    </source>
</reference>
<feature type="chain" id="PRO_1000074905" description="Serine hydroxymethyltransferase">
    <location>
        <begin position="1"/>
        <end position="420"/>
    </location>
</feature>
<feature type="binding site" evidence="1">
    <location>
        <position position="121"/>
    </location>
    <ligand>
        <name>(6S)-5,6,7,8-tetrahydrofolate</name>
        <dbReference type="ChEBI" id="CHEBI:57453"/>
    </ligand>
</feature>
<feature type="binding site" evidence="1">
    <location>
        <begin position="125"/>
        <end position="127"/>
    </location>
    <ligand>
        <name>(6S)-5,6,7,8-tetrahydrofolate</name>
        <dbReference type="ChEBI" id="CHEBI:57453"/>
    </ligand>
</feature>
<feature type="binding site" evidence="1">
    <location>
        <position position="246"/>
    </location>
    <ligand>
        <name>(6S)-5,6,7,8-tetrahydrofolate</name>
        <dbReference type="ChEBI" id="CHEBI:57453"/>
    </ligand>
</feature>
<feature type="binding site" evidence="1">
    <location>
        <begin position="354"/>
        <end position="356"/>
    </location>
    <ligand>
        <name>(6S)-5,6,7,8-tetrahydrofolate</name>
        <dbReference type="ChEBI" id="CHEBI:57453"/>
    </ligand>
</feature>
<feature type="site" description="Plays an important role in substrate specificity" evidence="1">
    <location>
        <position position="229"/>
    </location>
</feature>
<feature type="modified residue" description="N6-(pyridoxal phosphate)lysine" evidence="1">
    <location>
        <position position="230"/>
    </location>
</feature>
<keyword id="KW-0028">Amino-acid biosynthesis</keyword>
<keyword id="KW-0963">Cytoplasm</keyword>
<keyword id="KW-0554">One-carbon metabolism</keyword>
<keyword id="KW-0663">Pyridoxal phosphate</keyword>
<keyword id="KW-0808">Transferase</keyword>
<dbReference type="EC" id="2.1.2.1" evidence="1"/>
<dbReference type="EMBL" id="CP000766">
    <property type="protein sequence ID" value="ABY73087.1"/>
    <property type="molecule type" value="Genomic_DNA"/>
</dbReference>
<dbReference type="RefSeq" id="WP_012151264.1">
    <property type="nucleotide sequence ID" value="NC_010263.3"/>
</dbReference>
<dbReference type="SMR" id="B0BV27"/>
<dbReference type="GeneID" id="79937772"/>
<dbReference type="KEGG" id="rrj:RrIowa_1353"/>
<dbReference type="eggNOG" id="COG0112">
    <property type="taxonomic scope" value="Bacteria"/>
</dbReference>
<dbReference type="HOGENOM" id="CLU_022477_2_1_5"/>
<dbReference type="UniPathway" id="UPA00193"/>
<dbReference type="UniPathway" id="UPA00288">
    <property type="reaction ID" value="UER01023"/>
</dbReference>
<dbReference type="Proteomes" id="UP000000796">
    <property type="component" value="Chromosome"/>
</dbReference>
<dbReference type="GO" id="GO:0005829">
    <property type="term" value="C:cytosol"/>
    <property type="evidence" value="ECO:0007669"/>
    <property type="project" value="TreeGrafter"/>
</dbReference>
<dbReference type="GO" id="GO:0004372">
    <property type="term" value="F:glycine hydroxymethyltransferase activity"/>
    <property type="evidence" value="ECO:0007669"/>
    <property type="project" value="UniProtKB-UniRule"/>
</dbReference>
<dbReference type="GO" id="GO:0030170">
    <property type="term" value="F:pyridoxal phosphate binding"/>
    <property type="evidence" value="ECO:0007669"/>
    <property type="project" value="UniProtKB-UniRule"/>
</dbReference>
<dbReference type="GO" id="GO:0019264">
    <property type="term" value="P:glycine biosynthetic process from serine"/>
    <property type="evidence" value="ECO:0007669"/>
    <property type="project" value="UniProtKB-UniRule"/>
</dbReference>
<dbReference type="GO" id="GO:0035999">
    <property type="term" value="P:tetrahydrofolate interconversion"/>
    <property type="evidence" value="ECO:0007669"/>
    <property type="project" value="UniProtKB-UniRule"/>
</dbReference>
<dbReference type="CDD" id="cd00378">
    <property type="entry name" value="SHMT"/>
    <property type="match status" value="1"/>
</dbReference>
<dbReference type="FunFam" id="3.40.640.10:FF:000001">
    <property type="entry name" value="Serine hydroxymethyltransferase"/>
    <property type="match status" value="1"/>
</dbReference>
<dbReference type="Gene3D" id="3.90.1150.10">
    <property type="entry name" value="Aspartate Aminotransferase, domain 1"/>
    <property type="match status" value="1"/>
</dbReference>
<dbReference type="Gene3D" id="3.40.640.10">
    <property type="entry name" value="Type I PLP-dependent aspartate aminotransferase-like (Major domain)"/>
    <property type="match status" value="1"/>
</dbReference>
<dbReference type="HAMAP" id="MF_00051">
    <property type="entry name" value="SHMT"/>
    <property type="match status" value="1"/>
</dbReference>
<dbReference type="InterPro" id="IPR015424">
    <property type="entry name" value="PyrdxlP-dep_Trfase"/>
</dbReference>
<dbReference type="InterPro" id="IPR015421">
    <property type="entry name" value="PyrdxlP-dep_Trfase_major"/>
</dbReference>
<dbReference type="InterPro" id="IPR015422">
    <property type="entry name" value="PyrdxlP-dep_Trfase_small"/>
</dbReference>
<dbReference type="InterPro" id="IPR001085">
    <property type="entry name" value="Ser_HO-MeTrfase"/>
</dbReference>
<dbReference type="InterPro" id="IPR049943">
    <property type="entry name" value="Ser_HO-MeTrfase-like"/>
</dbReference>
<dbReference type="InterPro" id="IPR019798">
    <property type="entry name" value="Ser_HO-MeTrfase_PLP_BS"/>
</dbReference>
<dbReference type="InterPro" id="IPR039429">
    <property type="entry name" value="SHMT-like_dom"/>
</dbReference>
<dbReference type="NCBIfam" id="NF000586">
    <property type="entry name" value="PRK00011.1"/>
    <property type="match status" value="1"/>
</dbReference>
<dbReference type="PANTHER" id="PTHR11680">
    <property type="entry name" value="SERINE HYDROXYMETHYLTRANSFERASE"/>
    <property type="match status" value="1"/>
</dbReference>
<dbReference type="PANTHER" id="PTHR11680:SF35">
    <property type="entry name" value="SERINE HYDROXYMETHYLTRANSFERASE 1"/>
    <property type="match status" value="1"/>
</dbReference>
<dbReference type="Pfam" id="PF00464">
    <property type="entry name" value="SHMT"/>
    <property type="match status" value="1"/>
</dbReference>
<dbReference type="PIRSF" id="PIRSF000412">
    <property type="entry name" value="SHMT"/>
    <property type="match status" value="1"/>
</dbReference>
<dbReference type="SUPFAM" id="SSF53383">
    <property type="entry name" value="PLP-dependent transferases"/>
    <property type="match status" value="1"/>
</dbReference>
<dbReference type="PROSITE" id="PS00096">
    <property type="entry name" value="SHMT"/>
    <property type="match status" value="1"/>
</dbReference>
<comment type="function">
    <text evidence="1">Catalyzes the reversible interconversion of serine and glycine with tetrahydrofolate (THF) serving as the one-carbon carrier. This reaction serves as the major source of one-carbon groups required for the biosynthesis of purines, thymidylate, methionine, and other important biomolecules. Also exhibits THF-independent aldolase activity toward beta-hydroxyamino acids, producing glycine and aldehydes, via a retro-aldol mechanism.</text>
</comment>
<comment type="catalytic activity">
    <reaction evidence="1">
        <text>(6R)-5,10-methylene-5,6,7,8-tetrahydrofolate + glycine + H2O = (6S)-5,6,7,8-tetrahydrofolate + L-serine</text>
        <dbReference type="Rhea" id="RHEA:15481"/>
        <dbReference type="ChEBI" id="CHEBI:15377"/>
        <dbReference type="ChEBI" id="CHEBI:15636"/>
        <dbReference type="ChEBI" id="CHEBI:33384"/>
        <dbReference type="ChEBI" id="CHEBI:57305"/>
        <dbReference type="ChEBI" id="CHEBI:57453"/>
        <dbReference type="EC" id="2.1.2.1"/>
    </reaction>
</comment>
<comment type="cofactor">
    <cofactor evidence="1">
        <name>pyridoxal 5'-phosphate</name>
        <dbReference type="ChEBI" id="CHEBI:597326"/>
    </cofactor>
</comment>
<comment type="pathway">
    <text evidence="1">One-carbon metabolism; tetrahydrofolate interconversion.</text>
</comment>
<comment type="pathway">
    <text evidence="1">Amino-acid biosynthesis; glycine biosynthesis; glycine from L-serine: step 1/1.</text>
</comment>
<comment type="subunit">
    <text evidence="1">Homodimer.</text>
</comment>
<comment type="subcellular location">
    <subcellularLocation>
        <location evidence="1">Cytoplasm</location>
    </subcellularLocation>
</comment>
<comment type="similarity">
    <text evidence="1">Belongs to the SHMT family.</text>
</comment>
<organism>
    <name type="scientific">Rickettsia rickettsii (strain Iowa)</name>
    <dbReference type="NCBI Taxonomy" id="452659"/>
    <lineage>
        <taxon>Bacteria</taxon>
        <taxon>Pseudomonadati</taxon>
        <taxon>Pseudomonadota</taxon>
        <taxon>Alphaproteobacteria</taxon>
        <taxon>Rickettsiales</taxon>
        <taxon>Rickettsiaceae</taxon>
        <taxon>Rickettsieae</taxon>
        <taxon>Rickettsia</taxon>
        <taxon>spotted fever group</taxon>
    </lineage>
</organism>
<evidence type="ECO:0000255" key="1">
    <source>
        <dbReference type="HAMAP-Rule" id="MF_00051"/>
    </source>
</evidence>
<proteinExistence type="inferred from homology"/>
<gene>
    <name evidence="1" type="primary">glyA</name>
    <name type="ordered locus">RrIowa_1353</name>
</gene>
<protein>
    <recommendedName>
        <fullName evidence="1">Serine hydroxymethyltransferase</fullName>
        <shortName evidence="1">SHMT</shortName>
        <shortName evidence="1">Serine methylase</shortName>
        <ecNumber evidence="1">2.1.2.1</ecNumber>
    </recommendedName>
</protein>